<reference key="1">
    <citation type="journal article" date="2014" name="Stand. Genomic Sci.">
        <title>Complete genome sequence of Burkholderia phymatum STM815(T), a broad host range and efficient nitrogen-fixing symbiont of Mimosa species.</title>
        <authorList>
            <person name="Moulin L."/>
            <person name="Klonowska A."/>
            <person name="Caroline B."/>
            <person name="Booth K."/>
            <person name="Vriezen J.A."/>
            <person name="Melkonian R."/>
            <person name="James E.K."/>
            <person name="Young J.P."/>
            <person name="Bena G."/>
            <person name="Hauser L."/>
            <person name="Land M."/>
            <person name="Kyrpides N."/>
            <person name="Bruce D."/>
            <person name="Chain P."/>
            <person name="Copeland A."/>
            <person name="Pitluck S."/>
            <person name="Woyke T."/>
            <person name="Lizotte-Waniewski M."/>
            <person name="Bristow J."/>
            <person name="Riley M."/>
        </authorList>
    </citation>
    <scope>NUCLEOTIDE SEQUENCE [LARGE SCALE GENOMIC DNA]</scope>
    <source>
        <strain>DSM 17167 / CIP 108236 / LMG 21445 / STM815</strain>
    </source>
</reference>
<sequence>MAFTLEEIVQRFGGEIVGDRAHRVGNLAPLDQAGPDQLAFLANPKYLAQVETTRAGAVLINAADLAKLASPDGRNFIVTPNPYAYFARLAQAFIDMATPKAKRGVHPSATVDSSAQIAATAVIGPNVTVEAGVAIGENVRLDANVFVGRGTTIGAGSHLYPNVAVYHGCRLGERAIVHAGAVIGSDGFGFAPDFVGDGDARTGSWVKIPQVGGVSIGPDVEIGANTTIDRGAMADTVIEECVKIDNLVQIGHNCKIGAYTVIAGCAGIAGSTTIGRHCMIGGAVGIAGHVTLGDYVIVTAKSGVSKSLPKAGIYTSAFPAVDHADWNRSAALMRNLDKLRDRIKALEAAVASASGDKA</sequence>
<proteinExistence type="inferred from homology"/>
<evidence type="ECO:0000255" key="1">
    <source>
        <dbReference type="HAMAP-Rule" id="MF_00523"/>
    </source>
</evidence>
<accession>B2JIB6</accession>
<gene>
    <name evidence="1" type="primary">lpxD</name>
    <name type="ordered locus">Bphy_1328</name>
</gene>
<dbReference type="EC" id="2.3.1.191" evidence="1"/>
<dbReference type="EMBL" id="CP001043">
    <property type="protein sequence ID" value="ACC70510.1"/>
    <property type="molecule type" value="Genomic_DNA"/>
</dbReference>
<dbReference type="RefSeq" id="WP_012400724.1">
    <property type="nucleotide sequence ID" value="NC_010622.1"/>
</dbReference>
<dbReference type="SMR" id="B2JIB6"/>
<dbReference type="STRING" id="391038.Bphy_1328"/>
<dbReference type="KEGG" id="bph:Bphy_1328"/>
<dbReference type="eggNOG" id="COG1044">
    <property type="taxonomic scope" value="Bacteria"/>
</dbReference>
<dbReference type="HOGENOM" id="CLU_049865_0_0_4"/>
<dbReference type="OrthoDB" id="9784739at2"/>
<dbReference type="UniPathway" id="UPA00973"/>
<dbReference type="Proteomes" id="UP000001192">
    <property type="component" value="Chromosome 1"/>
</dbReference>
<dbReference type="GO" id="GO:0016020">
    <property type="term" value="C:membrane"/>
    <property type="evidence" value="ECO:0007669"/>
    <property type="project" value="GOC"/>
</dbReference>
<dbReference type="GO" id="GO:0016410">
    <property type="term" value="F:N-acyltransferase activity"/>
    <property type="evidence" value="ECO:0007669"/>
    <property type="project" value="InterPro"/>
</dbReference>
<dbReference type="GO" id="GO:0009245">
    <property type="term" value="P:lipid A biosynthetic process"/>
    <property type="evidence" value="ECO:0007669"/>
    <property type="project" value="UniProtKB-UniRule"/>
</dbReference>
<dbReference type="CDD" id="cd03352">
    <property type="entry name" value="LbH_LpxD"/>
    <property type="match status" value="1"/>
</dbReference>
<dbReference type="Gene3D" id="2.160.10.10">
    <property type="entry name" value="Hexapeptide repeat proteins"/>
    <property type="match status" value="1"/>
</dbReference>
<dbReference type="Gene3D" id="3.40.1390.10">
    <property type="entry name" value="MurE/MurF, N-terminal domain"/>
    <property type="match status" value="1"/>
</dbReference>
<dbReference type="HAMAP" id="MF_00523">
    <property type="entry name" value="LpxD"/>
    <property type="match status" value="1"/>
</dbReference>
<dbReference type="InterPro" id="IPR001451">
    <property type="entry name" value="Hexapep"/>
</dbReference>
<dbReference type="InterPro" id="IPR018357">
    <property type="entry name" value="Hexapep_transf_CS"/>
</dbReference>
<dbReference type="InterPro" id="IPR007691">
    <property type="entry name" value="LpxD"/>
</dbReference>
<dbReference type="InterPro" id="IPR011004">
    <property type="entry name" value="Trimer_LpxA-like_sf"/>
</dbReference>
<dbReference type="InterPro" id="IPR020573">
    <property type="entry name" value="UDP_GlcNAc_AcTrfase_non-rep"/>
</dbReference>
<dbReference type="NCBIfam" id="TIGR01853">
    <property type="entry name" value="lipid_A_lpxD"/>
    <property type="match status" value="1"/>
</dbReference>
<dbReference type="NCBIfam" id="NF002060">
    <property type="entry name" value="PRK00892.1"/>
    <property type="match status" value="1"/>
</dbReference>
<dbReference type="PANTHER" id="PTHR43378">
    <property type="entry name" value="UDP-3-O-ACYLGLUCOSAMINE N-ACYLTRANSFERASE"/>
    <property type="match status" value="1"/>
</dbReference>
<dbReference type="PANTHER" id="PTHR43378:SF2">
    <property type="entry name" value="UDP-3-O-ACYLGLUCOSAMINE N-ACYLTRANSFERASE 1, MITOCHONDRIAL-RELATED"/>
    <property type="match status" value="1"/>
</dbReference>
<dbReference type="Pfam" id="PF00132">
    <property type="entry name" value="Hexapep"/>
    <property type="match status" value="2"/>
</dbReference>
<dbReference type="Pfam" id="PF14602">
    <property type="entry name" value="Hexapep_2"/>
    <property type="match status" value="2"/>
</dbReference>
<dbReference type="Pfam" id="PF04613">
    <property type="entry name" value="LpxD"/>
    <property type="match status" value="1"/>
</dbReference>
<dbReference type="SUPFAM" id="SSF51161">
    <property type="entry name" value="Trimeric LpxA-like enzymes"/>
    <property type="match status" value="1"/>
</dbReference>
<dbReference type="PROSITE" id="PS00101">
    <property type="entry name" value="HEXAPEP_TRANSFERASES"/>
    <property type="match status" value="4"/>
</dbReference>
<organism>
    <name type="scientific">Paraburkholderia phymatum (strain DSM 17167 / CIP 108236 / LMG 21445 / STM815)</name>
    <name type="common">Burkholderia phymatum</name>
    <dbReference type="NCBI Taxonomy" id="391038"/>
    <lineage>
        <taxon>Bacteria</taxon>
        <taxon>Pseudomonadati</taxon>
        <taxon>Pseudomonadota</taxon>
        <taxon>Betaproteobacteria</taxon>
        <taxon>Burkholderiales</taxon>
        <taxon>Burkholderiaceae</taxon>
        <taxon>Paraburkholderia</taxon>
    </lineage>
</organism>
<protein>
    <recommendedName>
        <fullName evidence="1">UDP-3-O-acylglucosamine N-acyltransferase</fullName>
        <ecNumber evidence="1">2.3.1.191</ecNumber>
    </recommendedName>
</protein>
<feature type="chain" id="PRO_1000127667" description="UDP-3-O-acylglucosamine N-acyltransferase">
    <location>
        <begin position="1"/>
        <end position="358"/>
    </location>
</feature>
<feature type="active site" description="Proton acceptor" evidence="1">
    <location>
        <position position="252"/>
    </location>
</feature>
<keyword id="KW-0012">Acyltransferase</keyword>
<keyword id="KW-0441">Lipid A biosynthesis</keyword>
<keyword id="KW-0444">Lipid biosynthesis</keyword>
<keyword id="KW-0443">Lipid metabolism</keyword>
<keyword id="KW-1185">Reference proteome</keyword>
<keyword id="KW-0677">Repeat</keyword>
<keyword id="KW-0808">Transferase</keyword>
<comment type="function">
    <text evidence="1">Catalyzes the N-acylation of UDP-3-O-acylglucosamine using 3-hydroxyacyl-ACP as the acyl donor. Is involved in the biosynthesis of lipid A, a phosphorylated glycolipid that anchors the lipopolysaccharide to the outer membrane of the cell.</text>
</comment>
<comment type="catalytic activity">
    <reaction evidence="1">
        <text>a UDP-3-O-[(3R)-3-hydroxyacyl]-alpha-D-glucosamine + a (3R)-hydroxyacyl-[ACP] = a UDP-2-N,3-O-bis[(3R)-3-hydroxyacyl]-alpha-D-glucosamine + holo-[ACP] + H(+)</text>
        <dbReference type="Rhea" id="RHEA:53836"/>
        <dbReference type="Rhea" id="RHEA-COMP:9685"/>
        <dbReference type="Rhea" id="RHEA-COMP:9945"/>
        <dbReference type="ChEBI" id="CHEBI:15378"/>
        <dbReference type="ChEBI" id="CHEBI:64479"/>
        <dbReference type="ChEBI" id="CHEBI:78827"/>
        <dbReference type="ChEBI" id="CHEBI:137740"/>
        <dbReference type="ChEBI" id="CHEBI:137748"/>
        <dbReference type="EC" id="2.3.1.191"/>
    </reaction>
</comment>
<comment type="pathway">
    <text evidence="1">Bacterial outer membrane biogenesis; LPS lipid A biosynthesis.</text>
</comment>
<comment type="subunit">
    <text evidence="1">Homotrimer.</text>
</comment>
<comment type="similarity">
    <text evidence="1">Belongs to the transferase hexapeptide repeat family. LpxD subfamily.</text>
</comment>
<name>LPXD_PARP8</name>